<keyword id="KW-1003">Cell membrane</keyword>
<keyword id="KW-1015">Disulfide bond</keyword>
<keyword id="KW-0325">Glycoprotein</keyword>
<keyword id="KW-0472">Membrane</keyword>
<keyword id="KW-0552">Olfaction</keyword>
<keyword id="KW-0675">Receptor</keyword>
<keyword id="KW-1185">Reference proteome</keyword>
<keyword id="KW-0716">Sensory transduction</keyword>
<keyword id="KW-0812">Transmembrane</keyword>
<keyword id="KW-1133">Transmembrane helix</keyword>
<sequence length="545" mass="61611">MELKERNFKKIGLICVAVLLCGMVFSYGIFPSILRFMIKQNVLLKPGTQIRDMFEKIPFPLDFKLHIFNVTNPDEIMRGGKPRVNDIGPLYFEEWKEKYDTVDNVEEDTLTFTLRNTWIFRPDLSALTGEEIVTIPHPLIMGVLLMVQRDREAMMPLVKKGVNILFDPLESAFLKVRIMDLLFDGIYVDCSSQDFAAKALCSGMDSEGAVMPHNETHYKFSFFGMRNHTEAGRWVVYRGVKNIRDLGRVVSYNEETEMDIWDGDECNQYIGTDSTIFPPFLTAQDRLWAWSPEICRSLGAHYVHKSKYAGLPMSYFELDFGDLKNEPHNHCFCRDAPDDCPPKGTMDLSPCLGGPIIGSKPHFYGADPKLVEAVDGLAPNKAAHDVYIHFELASICWFTGSPVSAAKRLQFSMELGPIRDHELFGQLPDVILPMFWAEEGASLNKTWTNQLKYQLFLGLKFNATVKWLTIIIGTVGAVGSAYMYFRKETKTTDVAPVDVSTPDTNPSSAKDGVVNVSLGRNLPPVIDGLDKPPKLRATELQQERY</sequence>
<proteinExistence type="evidence at transcript level"/>
<feature type="chain" id="PRO_0000408231" description="Sensory neuron membrane protein 1">
    <location>
        <begin position="1"/>
        <end position="545"/>
    </location>
</feature>
<feature type="topological domain" description="Cytoplasmic" evidence="4">
    <location>
        <begin position="1"/>
        <end position="10"/>
    </location>
</feature>
<feature type="transmembrane region" description="Helical" evidence="4">
    <location>
        <begin position="11"/>
        <end position="31"/>
    </location>
</feature>
<feature type="topological domain" description="Extracellular" evidence="4">
    <location>
        <begin position="32"/>
        <end position="464"/>
    </location>
</feature>
<feature type="transmembrane region" description="Helical" evidence="4">
    <location>
        <begin position="465"/>
        <end position="485"/>
    </location>
</feature>
<feature type="topological domain" description="Cytoplasmic" evidence="4">
    <location>
        <begin position="486"/>
        <end position="545"/>
    </location>
</feature>
<feature type="glycosylation site" description="N-linked (GlcNAc...) asparagine" evidence="4">
    <location>
        <position position="69"/>
    </location>
</feature>
<feature type="glycosylation site" description="N-linked (GlcNAc...) asparagine" evidence="4">
    <location>
        <position position="214"/>
    </location>
</feature>
<feature type="glycosylation site" description="N-linked (GlcNAc...) asparagine" evidence="4">
    <location>
        <position position="227"/>
    </location>
</feature>
<feature type="glycosylation site" description="N-linked (GlcNAc...) asparagine" evidence="4">
    <location>
        <position position="444"/>
    </location>
</feature>
<feature type="glycosylation site" description="N-linked (GlcNAc...) asparagine" evidence="4">
    <location>
        <position position="462"/>
    </location>
</feature>
<feature type="disulfide bond" evidence="2">
    <location>
        <begin position="266"/>
        <end position="331"/>
    </location>
</feature>
<feature type="disulfide bond" evidence="2">
    <location>
        <begin position="295"/>
        <end position="351"/>
    </location>
</feature>
<feature type="disulfide bond" evidence="2">
    <location>
        <begin position="333"/>
        <end position="340"/>
    </location>
</feature>
<gene>
    <name type="primary">snmp1</name>
    <name type="synonym">SCRB1</name>
    <name type="ORF">AGAP002451</name>
</gene>
<evidence type="ECO:0000250" key="1">
    <source>
        <dbReference type="UniProtKB" id="O02351"/>
    </source>
</evidence>
<evidence type="ECO:0000250" key="2">
    <source>
        <dbReference type="UniProtKB" id="P26201"/>
    </source>
</evidence>
<evidence type="ECO:0000250" key="3">
    <source>
        <dbReference type="UniProtKB" id="Q9VDD3"/>
    </source>
</evidence>
<evidence type="ECO:0000255" key="4"/>
<evidence type="ECO:0000269" key="5">
    <source>
    </source>
</evidence>
<evidence type="ECO:0000303" key="6">
    <source>
    </source>
</evidence>
<evidence type="ECO:0000305" key="7"/>
<protein>
    <recommendedName>
        <fullName evidence="6">Sensory neuron membrane protein 1</fullName>
    </recommendedName>
    <alternativeName>
        <fullName>Scavenger receptor class B</fullName>
    </alternativeName>
</protein>
<reference key="1">
    <citation type="journal article" date="2002" name="Science">
        <title>The genome sequence of the malaria mosquito Anopheles gambiae.</title>
        <authorList>
            <person name="Holt R.A."/>
            <person name="Subramanian G.M."/>
            <person name="Halpern A."/>
            <person name="Sutton G.G."/>
            <person name="Charlab R."/>
            <person name="Nusskern D.R."/>
            <person name="Wincker P."/>
            <person name="Clark A.G."/>
            <person name="Ribeiro J.M.C."/>
            <person name="Wides R."/>
            <person name="Salzberg S.L."/>
            <person name="Loftus B.J."/>
            <person name="Yandell M.D."/>
            <person name="Majoros W.H."/>
            <person name="Rusch D.B."/>
            <person name="Lai Z."/>
            <person name="Kraft C.L."/>
            <person name="Abril J.F."/>
            <person name="Anthouard V."/>
            <person name="Arensburger P."/>
            <person name="Atkinson P.W."/>
            <person name="Baden H."/>
            <person name="de Berardinis V."/>
            <person name="Baldwin D."/>
            <person name="Benes V."/>
            <person name="Biedler J."/>
            <person name="Blass C."/>
            <person name="Bolanos R."/>
            <person name="Boscus D."/>
            <person name="Barnstead M."/>
            <person name="Cai S."/>
            <person name="Center A."/>
            <person name="Chaturverdi K."/>
            <person name="Christophides G.K."/>
            <person name="Chrystal M.A.M."/>
            <person name="Clamp M."/>
            <person name="Cravchik A."/>
            <person name="Curwen V."/>
            <person name="Dana A."/>
            <person name="Delcher A."/>
            <person name="Dew I."/>
            <person name="Evans C.A."/>
            <person name="Flanigan M."/>
            <person name="Grundschober-Freimoser A."/>
            <person name="Friedli L."/>
            <person name="Gu Z."/>
            <person name="Guan P."/>
            <person name="Guigo R."/>
            <person name="Hillenmeyer M.E."/>
            <person name="Hladun S.L."/>
            <person name="Hogan J.R."/>
            <person name="Hong Y.S."/>
            <person name="Hoover J."/>
            <person name="Jaillon O."/>
            <person name="Ke Z."/>
            <person name="Kodira C.D."/>
            <person name="Kokoza E."/>
            <person name="Koutsos A."/>
            <person name="Letunic I."/>
            <person name="Levitsky A.A."/>
            <person name="Liang Y."/>
            <person name="Lin J.-J."/>
            <person name="Lobo N.F."/>
            <person name="Lopez J.R."/>
            <person name="Malek J.A."/>
            <person name="McIntosh T.C."/>
            <person name="Meister S."/>
            <person name="Miller J.R."/>
            <person name="Mobarry C."/>
            <person name="Mongin E."/>
            <person name="Murphy S.D."/>
            <person name="O'Brochta D.A."/>
            <person name="Pfannkoch C."/>
            <person name="Qi R."/>
            <person name="Regier M.A."/>
            <person name="Remington K."/>
            <person name="Shao H."/>
            <person name="Sharakhova M.V."/>
            <person name="Sitter C.D."/>
            <person name="Shetty J."/>
            <person name="Smith T.J."/>
            <person name="Strong R."/>
            <person name="Sun J."/>
            <person name="Thomasova D."/>
            <person name="Ton L.Q."/>
            <person name="Topalis P."/>
            <person name="Tu Z.J."/>
            <person name="Unger M.F."/>
            <person name="Walenz B."/>
            <person name="Wang A.H."/>
            <person name="Wang J."/>
            <person name="Wang M."/>
            <person name="Wang X."/>
            <person name="Woodford K.J."/>
            <person name="Wortman J.R."/>
            <person name="Wu M."/>
            <person name="Yao A."/>
            <person name="Zdobnov E.M."/>
            <person name="Zhang H."/>
            <person name="Zhao Q."/>
            <person name="Zhao S."/>
            <person name="Zhu S.C."/>
            <person name="Zhimulev I."/>
            <person name="Coluzzi M."/>
            <person name="della Torre A."/>
            <person name="Roth C.W."/>
            <person name="Louis C."/>
            <person name="Kalush F."/>
            <person name="Mural R.J."/>
            <person name="Myers E.W."/>
            <person name="Adams M.D."/>
            <person name="Smith H.O."/>
            <person name="Broder S."/>
            <person name="Gardner M.J."/>
            <person name="Fraser C.M."/>
            <person name="Birney E."/>
            <person name="Bork P."/>
            <person name="Brey P.T."/>
            <person name="Venter J.C."/>
            <person name="Weissenbach J."/>
            <person name="Kafatos F.C."/>
            <person name="Collins F.H."/>
            <person name="Hoffman S.L."/>
        </authorList>
    </citation>
    <scope>NUCLEOTIDE SEQUENCE [LARGE SCALE GENOMIC DNA]</scope>
    <source>
        <strain>PEST</strain>
    </source>
</reference>
<reference evidence="7" key="2">
    <citation type="journal article" date="2007" name="Nature">
        <title>An essential role for a CD36-related receptor in pheromone detection in Drosophila.</title>
        <authorList>
            <person name="Benton R."/>
            <person name="Vannice K.S."/>
            <person name="Vosshall L.B."/>
        </authorList>
    </citation>
    <scope>TISSUE SPECIFICITY</scope>
</reference>
<reference evidence="7" key="3">
    <citation type="journal article" date="2008" name="Insect Biochem. Mol. Biol.">
        <title>The SNMP/CD36 gene family in Diptera, Hymenoptera and Coleoptera: Drosophila melanogaster, D. pseudoobscura, Anopheles gambiae, Aedes aegypti, Apis mellifera, and Tribolium castaneum.</title>
        <authorList>
            <person name="Nichols Z."/>
            <person name="Vogt R.G."/>
        </authorList>
    </citation>
    <scope>IDENTIFICATION</scope>
</reference>
<name>SNMP1_ANOGA</name>
<organism>
    <name type="scientific">Anopheles gambiae</name>
    <name type="common">African malaria mosquito</name>
    <dbReference type="NCBI Taxonomy" id="7165"/>
    <lineage>
        <taxon>Eukaryota</taxon>
        <taxon>Metazoa</taxon>
        <taxon>Ecdysozoa</taxon>
        <taxon>Arthropoda</taxon>
        <taxon>Hexapoda</taxon>
        <taxon>Insecta</taxon>
        <taxon>Pterygota</taxon>
        <taxon>Neoptera</taxon>
        <taxon>Endopterygota</taxon>
        <taxon>Diptera</taxon>
        <taxon>Nematocera</taxon>
        <taxon>Culicoidea</taxon>
        <taxon>Culicidae</taxon>
        <taxon>Anophelinae</taxon>
        <taxon>Anopheles</taxon>
    </lineage>
</organism>
<accession>Q7QC49</accession>
<accession>Q7QC47</accession>
<comment type="function">
    <text evidence="3">Plays an olfactory role that is not restricted to pheromone sensitivity.</text>
</comment>
<comment type="subcellular location">
    <subcellularLocation>
        <location evidence="1">Cell membrane</location>
        <topology evidence="1">Multi-pass membrane protein</topology>
    </subcellularLocation>
</comment>
<comment type="tissue specificity">
    <text evidence="5">Selectively expressed in antenna.</text>
</comment>
<comment type="similarity">
    <text evidence="7">Belongs to the CD36 family.</text>
</comment>
<dbReference type="EMBL" id="AAAB01008859">
    <property type="protein sequence ID" value="EAA07986.4"/>
    <property type="molecule type" value="Genomic_DNA"/>
</dbReference>
<dbReference type="RefSeq" id="XP_312496.4">
    <property type="nucleotide sequence ID" value="XM_312496.4"/>
</dbReference>
<dbReference type="SMR" id="Q7QC49"/>
<dbReference type="FunCoup" id="Q7QC49">
    <property type="interactions" value="1"/>
</dbReference>
<dbReference type="STRING" id="7165.Q7QC49"/>
<dbReference type="GlyCosmos" id="Q7QC49">
    <property type="glycosylation" value="5 sites, No reported glycans"/>
</dbReference>
<dbReference type="PaxDb" id="7165-AGAP002451-PA"/>
<dbReference type="EnsemblMetazoa" id="AGAP002451-RA">
    <property type="protein sequence ID" value="AGAP002451-PA"/>
    <property type="gene ID" value="AGAP002451"/>
</dbReference>
<dbReference type="VEuPathDB" id="VectorBase:AGAMI1_007246"/>
<dbReference type="VEuPathDB" id="VectorBase:AGAP002451"/>
<dbReference type="eggNOG" id="KOG3776">
    <property type="taxonomic scope" value="Eukaryota"/>
</dbReference>
<dbReference type="HOGENOM" id="CLU_019853_1_2_1"/>
<dbReference type="InParanoid" id="Q7QC49"/>
<dbReference type="OMA" id="QRKSSYH"/>
<dbReference type="PhylomeDB" id="Q7QC49"/>
<dbReference type="Proteomes" id="UP000007062">
    <property type="component" value="Chromosome 2R"/>
</dbReference>
<dbReference type="GO" id="GO:0016020">
    <property type="term" value="C:membrane"/>
    <property type="evidence" value="ECO:0000318"/>
    <property type="project" value="GO_Central"/>
</dbReference>
<dbReference type="GO" id="GO:0005886">
    <property type="term" value="C:plasma membrane"/>
    <property type="evidence" value="ECO:0007669"/>
    <property type="project" value="UniProtKB-SubCell"/>
</dbReference>
<dbReference type="GO" id="GO:0005044">
    <property type="term" value="F:scavenger receptor activity"/>
    <property type="evidence" value="ECO:0000318"/>
    <property type="project" value="GO_Central"/>
</dbReference>
<dbReference type="GO" id="GO:0007608">
    <property type="term" value="P:sensory perception of smell"/>
    <property type="evidence" value="ECO:0007669"/>
    <property type="project" value="UniProtKB-KW"/>
</dbReference>
<dbReference type="InterPro" id="IPR002159">
    <property type="entry name" value="CD36_fam"/>
</dbReference>
<dbReference type="PANTHER" id="PTHR11923">
    <property type="entry name" value="SCAVENGER RECEPTOR CLASS B TYPE-1 SR-B1"/>
    <property type="match status" value="1"/>
</dbReference>
<dbReference type="PANTHER" id="PTHR11923:SF69">
    <property type="entry name" value="SENSORY NEURON MEMBRANE PROTEIN 1"/>
    <property type="match status" value="1"/>
</dbReference>
<dbReference type="Pfam" id="PF01130">
    <property type="entry name" value="CD36"/>
    <property type="match status" value="1"/>
</dbReference>
<dbReference type="PRINTS" id="PR01609">
    <property type="entry name" value="CD36FAMILY"/>
</dbReference>